<name>O265_CONLI</name>
<keyword id="KW-0165">Cleavage on pair of basic residues</keyword>
<keyword id="KW-1015">Disulfide bond</keyword>
<keyword id="KW-0960">Knottin</keyword>
<keyword id="KW-0528">Neurotoxin</keyword>
<keyword id="KW-0964">Secreted</keyword>
<keyword id="KW-0732">Signal</keyword>
<keyword id="KW-0800">Toxin</keyword>
<organism>
    <name type="scientific">Conus lividus</name>
    <name type="common">Livid cone</name>
    <dbReference type="NCBI Taxonomy" id="89426"/>
    <lineage>
        <taxon>Eukaryota</taxon>
        <taxon>Metazoa</taxon>
        <taxon>Spiralia</taxon>
        <taxon>Lophotrochozoa</taxon>
        <taxon>Mollusca</taxon>
        <taxon>Gastropoda</taxon>
        <taxon>Caenogastropoda</taxon>
        <taxon>Neogastropoda</taxon>
        <taxon>Conoidea</taxon>
        <taxon>Conidae</taxon>
        <taxon>Conus</taxon>
        <taxon>Lividoconus</taxon>
    </lineage>
</organism>
<reference key="1">
    <citation type="journal article" date="2006" name="Chem. Biol. Drug Des.">
        <title>Novel O-superfamily conotoxins identified by cDNA cloning from three vermivorous Conus species.</title>
        <authorList>
            <person name="Zhangsun D."/>
            <person name="Luo S."/>
            <person name="Wu Y."/>
            <person name="Zhu X."/>
            <person name="Hu Y."/>
            <person name="Xie L."/>
        </authorList>
    </citation>
    <scope>NUCLEOTIDE SEQUENCE [MRNA]</scope>
    <source>
        <tissue>Venom duct</tissue>
    </source>
</reference>
<accession>Q3YEF8</accession>
<evidence type="ECO:0000250" key="1"/>
<evidence type="ECO:0000255" key="2"/>
<evidence type="ECO:0000305" key="3"/>
<protein>
    <recommendedName>
        <fullName>Conotoxin LiC53</fullName>
    </recommendedName>
</protein>
<comment type="subcellular location">
    <subcellularLocation>
        <location evidence="1">Secreted</location>
    </subcellularLocation>
</comment>
<comment type="tissue specificity">
    <text>Expressed by the venom duct.</text>
</comment>
<comment type="domain">
    <text evidence="1">The presence of a 'disulfide through disulfide knot' structurally defines this protein as a knottin.</text>
</comment>
<comment type="domain">
    <text>The cysteine framework is VI/VII (C-C-CC-C-C).</text>
</comment>
<comment type="similarity">
    <text evidence="3">Belongs to the conotoxin O2 superfamily.</text>
</comment>
<feature type="signal peptide" evidence="2">
    <location>
        <begin position="1"/>
        <end position="23"/>
    </location>
</feature>
<feature type="propeptide" id="PRO_0000315490" evidence="3">
    <location>
        <begin position="24"/>
        <end position="41"/>
    </location>
</feature>
<feature type="peptide" id="PRO_0000315491" description="Conotoxin LiC53">
    <location>
        <begin position="44"/>
        <end position="72"/>
    </location>
</feature>
<feature type="disulfide bond" evidence="1">
    <location>
        <begin position="45"/>
        <end position="59"/>
    </location>
</feature>
<feature type="disulfide bond" evidence="1">
    <location>
        <begin position="52"/>
        <end position="63"/>
    </location>
</feature>
<feature type="disulfide bond" evidence="1">
    <location>
        <begin position="58"/>
        <end position="68"/>
    </location>
</feature>
<sequence>MEKLTSLLLVAALLMLTQTLIQGGGEDRPNKKFLQKIKSTAKRECTAPSGYCDYPEECCEVECGRHYCDWWY</sequence>
<dbReference type="EMBL" id="DQ141155">
    <property type="protein sequence ID" value="AAZ83756.1"/>
    <property type="molecule type" value="mRNA"/>
</dbReference>
<dbReference type="ConoServer" id="2721">
    <property type="toxin name" value="LiC53 precursor"/>
</dbReference>
<dbReference type="GO" id="GO:0005576">
    <property type="term" value="C:extracellular region"/>
    <property type="evidence" value="ECO:0007669"/>
    <property type="project" value="UniProtKB-SubCell"/>
</dbReference>
<dbReference type="GO" id="GO:0008200">
    <property type="term" value="F:ion channel inhibitor activity"/>
    <property type="evidence" value="ECO:0007669"/>
    <property type="project" value="InterPro"/>
</dbReference>
<dbReference type="GO" id="GO:0090729">
    <property type="term" value="F:toxin activity"/>
    <property type="evidence" value="ECO:0007669"/>
    <property type="project" value="UniProtKB-KW"/>
</dbReference>
<dbReference type="InterPro" id="IPR004214">
    <property type="entry name" value="Conotoxin"/>
</dbReference>
<dbReference type="Pfam" id="PF02950">
    <property type="entry name" value="Conotoxin"/>
    <property type="match status" value="1"/>
</dbReference>
<proteinExistence type="evidence at transcript level"/>